<dbReference type="EC" id="1.7.-.-" evidence="1"/>
<dbReference type="EC" id="1.11.1.-" evidence="1"/>
<dbReference type="EMBL" id="M14433">
    <property type="protein sequence ID" value="AAA31073.1"/>
    <property type="molecule type" value="mRNA"/>
</dbReference>
<dbReference type="PIR" id="A23988">
    <property type="entry name" value="MYPG"/>
</dbReference>
<dbReference type="RefSeq" id="NP_999401.1">
    <property type="nucleotide sequence ID" value="NM_214236.1"/>
</dbReference>
<dbReference type="PDB" id="1M6C">
    <property type="method" value="X-ray"/>
    <property type="resolution" value="1.90 A"/>
    <property type="chains" value="A/B=2-154"/>
</dbReference>
<dbReference type="PDB" id="1M6M">
    <property type="method" value="X-ray"/>
    <property type="resolution" value="1.80 A"/>
    <property type="chains" value="A/B=2-154"/>
</dbReference>
<dbReference type="PDB" id="1MDN">
    <property type="method" value="X-ray"/>
    <property type="resolution" value="1.98 A"/>
    <property type="chains" value="A/B=2-154"/>
</dbReference>
<dbReference type="PDB" id="1MNH">
    <property type="method" value="X-ray"/>
    <property type="resolution" value="2.30 A"/>
    <property type="chains" value="A=2-154"/>
</dbReference>
<dbReference type="PDB" id="1MNI">
    <property type="method" value="X-ray"/>
    <property type="resolution" value="2.07 A"/>
    <property type="chains" value="A/B=2-154"/>
</dbReference>
<dbReference type="PDB" id="1MNJ">
    <property type="method" value="X-ray"/>
    <property type="resolution" value="2.20 A"/>
    <property type="chains" value="A/B=2-154"/>
</dbReference>
<dbReference type="PDB" id="1MNK">
    <property type="method" value="X-ray"/>
    <property type="resolution" value="2.20 A"/>
    <property type="chains" value="A/B=2-154"/>
</dbReference>
<dbReference type="PDB" id="1MNO">
    <property type="method" value="X-ray"/>
    <property type="resolution" value="1.95 A"/>
    <property type="chains" value="A/B=2-154"/>
</dbReference>
<dbReference type="PDB" id="1MWC">
    <property type="method" value="X-ray"/>
    <property type="resolution" value="1.70 A"/>
    <property type="chains" value="A/B=2-154"/>
</dbReference>
<dbReference type="PDB" id="1MWD">
    <property type="method" value="X-ray"/>
    <property type="resolution" value="1.80 A"/>
    <property type="chains" value="A/B=2-154"/>
</dbReference>
<dbReference type="PDB" id="1MYG">
    <property type="method" value="X-ray"/>
    <property type="resolution" value="1.75 A"/>
    <property type="chains" value="A/B=2-154"/>
</dbReference>
<dbReference type="PDB" id="1MYH">
    <property type="method" value="X-ray"/>
    <property type="resolution" value="1.90 A"/>
    <property type="chains" value="A/B=2-154"/>
</dbReference>
<dbReference type="PDB" id="1MYI">
    <property type="method" value="X-ray"/>
    <property type="resolution" value="2.00 A"/>
    <property type="chains" value="A/B=2-154"/>
</dbReference>
<dbReference type="PDB" id="1MYJ">
    <property type="method" value="X-ray"/>
    <property type="resolution" value="1.90 A"/>
    <property type="chains" value="A/B=2-154"/>
</dbReference>
<dbReference type="PDB" id="1PMB">
    <property type="method" value="X-ray"/>
    <property type="resolution" value="2.50 A"/>
    <property type="chains" value="A/B=2-154"/>
</dbReference>
<dbReference type="PDB" id="1YCA">
    <property type="method" value="X-ray"/>
    <property type="resolution" value="2.90 A"/>
    <property type="chains" value="A/B=2-154"/>
</dbReference>
<dbReference type="PDB" id="1YCB">
    <property type="method" value="X-ray"/>
    <property type="resolution" value="2.10 A"/>
    <property type="chains" value="A/B=2-154"/>
</dbReference>
<dbReference type="PDBsum" id="1M6C"/>
<dbReference type="PDBsum" id="1M6M"/>
<dbReference type="PDBsum" id="1MDN"/>
<dbReference type="PDBsum" id="1MNH"/>
<dbReference type="PDBsum" id="1MNI"/>
<dbReference type="PDBsum" id="1MNJ"/>
<dbReference type="PDBsum" id="1MNK"/>
<dbReference type="PDBsum" id="1MNO"/>
<dbReference type="PDBsum" id="1MWC"/>
<dbReference type="PDBsum" id="1MWD"/>
<dbReference type="PDBsum" id="1MYG"/>
<dbReference type="PDBsum" id="1MYH"/>
<dbReference type="PDBsum" id="1MYI"/>
<dbReference type="PDBsum" id="1MYJ"/>
<dbReference type="PDBsum" id="1PMB"/>
<dbReference type="PDBsum" id="1YCA"/>
<dbReference type="PDBsum" id="1YCB"/>
<dbReference type="SMR" id="P02189"/>
<dbReference type="FunCoup" id="P02189">
    <property type="interactions" value="1129"/>
</dbReference>
<dbReference type="CarbonylDB" id="P02189"/>
<dbReference type="PeptideAtlas" id="P02189"/>
<dbReference type="Ensembl" id="ENSSSCT00030031982.1">
    <property type="protein sequence ID" value="ENSSSCP00030014409.1"/>
    <property type="gene ID" value="ENSSSCG00030023027.1"/>
</dbReference>
<dbReference type="Ensembl" id="ENSSSCT00040092074.1">
    <property type="protein sequence ID" value="ENSSSCP00040040622.1"/>
    <property type="gene ID" value="ENSSSCG00040067247.1"/>
</dbReference>
<dbReference type="Ensembl" id="ENSSSCT00045029098.1">
    <property type="protein sequence ID" value="ENSSSCP00045020148.1"/>
    <property type="gene ID" value="ENSSSCG00045017115.1"/>
</dbReference>
<dbReference type="Ensembl" id="ENSSSCT00045029138.1">
    <property type="protein sequence ID" value="ENSSSCP00045020182.1"/>
    <property type="gene ID" value="ENSSSCG00045017115.1"/>
</dbReference>
<dbReference type="Ensembl" id="ENSSSCT00045029160.1">
    <property type="protein sequence ID" value="ENSSSCP00045020198.1"/>
    <property type="gene ID" value="ENSSSCG00045017115.1"/>
</dbReference>
<dbReference type="Ensembl" id="ENSSSCT00050074045.1">
    <property type="protein sequence ID" value="ENSSSCP00050031909.1"/>
    <property type="gene ID" value="ENSSSCG00050054308.1"/>
</dbReference>
<dbReference type="Ensembl" id="ENSSSCT00070018337.1">
    <property type="protein sequence ID" value="ENSSSCP00070015233.1"/>
    <property type="gene ID" value="ENSSSCG00070009373.1"/>
</dbReference>
<dbReference type="Ensembl" id="ENSSSCT00070018457.1">
    <property type="protein sequence ID" value="ENSSSCP00070015335.1"/>
    <property type="gene ID" value="ENSSSCG00070009373.1"/>
</dbReference>
<dbReference type="Ensembl" id="ENSSSCT00085043514">
    <property type="protein sequence ID" value="ENSSSCP00085030486"/>
    <property type="gene ID" value="ENSSSCG00085022656"/>
</dbReference>
<dbReference type="Ensembl" id="ENSSSCT00090033296">
    <property type="protein sequence ID" value="ENSSSCP00090020724"/>
    <property type="gene ID" value="ENSSSCG00090018842"/>
</dbReference>
<dbReference type="Ensembl" id="ENSSSCT00105075288">
    <property type="protein sequence ID" value="ENSSSCP00105053269"/>
    <property type="gene ID" value="ENSSSCG00105039515"/>
</dbReference>
<dbReference type="Ensembl" id="ENSSSCT00110066914">
    <property type="protein sequence ID" value="ENSSSCP00110047152"/>
    <property type="gene ID" value="ENSSSCG00110035187"/>
</dbReference>
<dbReference type="Ensembl" id="ENSSSCT00115038664">
    <property type="protein sequence ID" value="ENSSSCP00115036477"/>
    <property type="gene ID" value="ENSSSCG00115021832"/>
</dbReference>
<dbReference type="Ensembl" id="ENSSSCT00130031741">
    <property type="protein sequence ID" value="ENSSSCP00130022092"/>
    <property type="gene ID" value="ENSSSCG00130016082"/>
</dbReference>
<dbReference type="GeneID" id="397467"/>
<dbReference type="CTD" id="4151"/>
<dbReference type="InParanoid" id="P02189"/>
<dbReference type="Reactome" id="R-SSC-8981607">
    <property type="pathway name" value="Intracellular oxygen transport"/>
</dbReference>
<dbReference type="EvolutionaryTrace" id="P02189"/>
<dbReference type="Proteomes" id="UP000008227">
    <property type="component" value="Unplaced"/>
</dbReference>
<dbReference type="Proteomes" id="UP000314985">
    <property type="component" value="Chromosome 5"/>
</dbReference>
<dbReference type="Proteomes" id="UP000694570">
    <property type="component" value="Unplaced"/>
</dbReference>
<dbReference type="Proteomes" id="UP000694571">
    <property type="component" value="Unplaced"/>
</dbReference>
<dbReference type="Proteomes" id="UP000694720">
    <property type="component" value="Unplaced"/>
</dbReference>
<dbReference type="Proteomes" id="UP000694722">
    <property type="component" value="Unplaced"/>
</dbReference>
<dbReference type="Proteomes" id="UP000694723">
    <property type="component" value="Unplaced"/>
</dbReference>
<dbReference type="Proteomes" id="UP000694724">
    <property type="component" value="Unplaced"/>
</dbReference>
<dbReference type="Proteomes" id="UP000694725">
    <property type="component" value="Unplaced"/>
</dbReference>
<dbReference type="Proteomes" id="UP000694726">
    <property type="component" value="Unplaced"/>
</dbReference>
<dbReference type="Proteomes" id="UP000694727">
    <property type="component" value="Unplaced"/>
</dbReference>
<dbReference type="Proteomes" id="UP000694728">
    <property type="component" value="Unplaced"/>
</dbReference>
<dbReference type="GO" id="GO:0016528">
    <property type="term" value="C:sarcoplasm"/>
    <property type="evidence" value="ECO:0000250"/>
    <property type="project" value="UniProtKB"/>
</dbReference>
<dbReference type="GO" id="GO:0020037">
    <property type="term" value="F:heme binding"/>
    <property type="evidence" value="ECO:0007669"/>
    <property type="project" value="InterPro"/>
</dbReference>
<dbReference type="GO" id="GO:0046872">
    <property type="term" value="F:metal ion binding"/>
    <property type="evidence" value="ECO:0007669"/>
    <property type="project" value="UniProtKB-KW"/>
</dbReference>
<dbReference type="GO" id="GO:0098809">
    <property type="term" value="F:nitrite reductase activity"/>
    <property type="evidence" value="ECO:0000250"/>
    <property type="project" value="UniProtKB"/>
</dbReference>
<dbReference type="GO" id="GO:0019825">
    <property type="term" value="F:oxygen binding"/>
    <property type="evidence" value="ECO:0000318"/>
    <property type="project" value="GO_Central"/>
</dbReference>
<dbReference type="GO" id="GO:0005344">
    <property type="term" value="F:oxygen carrier activity"/>
    <property type="evidence" value="ECO:0000250"/>
    <property type="project" value="UniProtKB"/>
</dbReference>
<dbReference type="GO" id="GO:0004601">
    <property type="term" value="F:peroxidase activity"/>
    <property type="evidence" value="ECO:0000250"/>
    <property type="project" value="UniProtKB"/>
</dbReference>
<dbReference type="GO" id="GO:0015671">
    <property type="term" value="P:oxygen transport"/>
    <property type="evidence" value="ECO:0000318"/>
    <property type="project" value="GO_Central"/>
</dbReference>
<dbReference type="GO" id="GO:0019430">
    <property type="term" value="P:removal of superoxide radicals"/>
    <property type="evidence" value="ECO:0000250"/>
    <property type="project" value="UniProtKB"/>
</dbReference>
<dbReference type="CDD" id="cd08926">
    <property type="entry name" value="Mb"/>
    <property type="match status" value="1"/>
</dbReference>
<dbReference type="Gene3D" id="6.10.140.2100">
    <property type="match status" value="1"/>
</dbReference>
<dbReference type="Gene3D" id="6.10.140.2110">
    <property type="match status" value="1"/>
</dbReference>
<dbReference type="InterPro" id="IPR000971">
    <property type="entry name" value="Globin"/>
</dbReference>
<dbReference type="InterPro" id="IPR009050">
    <property type="entry name" value="Globin-like_sf"/>
</dbReference>
<dbReference type="InterPro" id="IPR002335">
    <property type="entry name" value="Myoglobin"/>
</dbReference>
<dbReference type="PANTHER" id="PTHR47132">
    <property type="entry name" value="MYOGLOBIN"/>
    <property type="match status" value="1"/>
</dbReference>
<dbReference type="PANTHER" id="PTHR47132:SF1">
    <property type="entry name" value="MYOGLOBIN"/>
    <property type="match status" value="1"/>
</dbReference>
<dbReference type="Pfam" id="PF00042">
    <property type="entry name" value="Globin"/>
    <property type="match status" value="1"/>
</dbReference>
<dbReference type="PRINTS" id="PR00613">
    <property type="entry name" value="MYOGLOBIN"/>
</dbReference>
<dbReference type="SUPFAM" id="SSF46458">
    <property type="entry name" value="Globin-like"/>
    <property type="match status" value="1"/>
</dbReference>
<dbReference type="PROSITE" id="PS01033">
    <property type="entry name" value="GLOBIN"/>
    <property type="match status" value="1"/>
</dbReference>
<comment type="function">
    <text evidence="1">Monomeric heme protein which primary function is to store oxygen and facilitate its diffusion within muscle tissues. Reversibly binds oxygen through a pentacoordinated heme iron and enables its timely and efficient release as needed during periods of heightened demand. Depending on the oxidative conditions of tissues and cells, and in addition to its ability to bind oxygen, it also has a nitrite reductase activity whereby it regulates the production of bioactive nitric oxide. Under stress conditions, like hypoxia and anoxia, it also protects cells against reactive oxygen species thanks to its pseudoperoxidase activity.</text>
</comment>
<comment type="catalytic activity">
    <reaction evidence="1">
        <text>Fe(III)-heme b-[protein] + nitric oxide + H2O = Fe(II)-heme b-[protein] + nitrite + 2 H(+)</text>
        <dbReference type="Rhea" id="RHEA:77711"/>
        <dbReference type="Rhea" id="RHEA-COMP:18975"/>
        <dbReference type="Rhea" id="RHEA-COMP:18976"/>
        <dbReference type="ChEBI" id="CHEBI:15377"/>
        <dbReference type="ChEBI" id="CHEBI:15378"/>
        <dbReference type="ChEBI" id="CHEBI:16301"/>
        <dbReference type="ChEBI" id="CHEBI:16480"/>
        <dbReference type="ChEBI" id="CHEBI:55376"/>
        <dbReference type="ChEBI" id="CHEBI:60344"/>
    </reaction>
    <physiologicalReaction direction="right-to-left" evidence="1">
        <dbReference type="Rhea" id="RHEA:77713"/>
    </physiologicalReaction>
</comment>
<comment type="catalytic activity">
    <reaction evidence="1">
        <text>H2O2 + AH2 = A + 2 H2O</text>
        <dbReference type="Rhea" id="RHEA:30275"/>
        <dbReference type="ChEBI" id="CHEBI:13193"/>
        <dbReference type="ChEBI" id="CHEBI:15377"/>
        <dbReference type="ChEBI" id="CHEBI:16240"/>
        <dbReference type="ChEBI" id="CHEBI:17499"/>
    </reaction>
</comment>
<comment type="subunit">
    <text evidence="2">Monomeric.</text>
</comment>
<comment type="subcellular location">
    <subcellularLocation>
        <location evidence="1">Cytoplasm</location>
        <location evidence="1">Sarcoplasm</location>
    </subcellularLocation>
</comment>
<comment type="similarity">
    <text evidence="6">Belongs to the globin family.</text>
</comment>
<sequence>MGLSDGEWQLVLNVWGKVEADVAGHGQEVLIRLFKGHPETLEKFDKFKHLKSEDEMKASEDLKKHGNTVLTALGGILKKKGHHEAELTPLAQSHATKHKIPVKYLEFISEAIIQVLQSKHPGDFGADAQGAMSKALELFRNDMAAKYKELGFQG</sequence>
<accession>P02189</accession>
<proteinExistence type="evidence at protein level"/>
<feature type="initiator methionine" description="Removed" evidence="8">
    <location>
        <position position="1"/>
    </location>
</feature>
<feature type="chain" id="PRO_0000053336" description="Myoglobin">
    <location>
        <begin position="2"/>
        <end position="154"/>
    </location>
</feature>
<feature type="domain" description="Globin" evidence="6">
    <location>
        <begin position="2"/>
        <end position="148"/>
    </location>
</feature>
<feature type="binding site" evidence="4">
    <location>
        <position position="65"/>
    </location>
    <ligand>
        <name>nitrite</name>
        <dbReference type="ChEBI" id="CHEBI:16301"/>
    </ligand>
</feature>
<feature type="binding site" evidence="6 9 17">
    <location>
        <position position="65"/>
    </location>
    <ligand>
        <name>O2</name>
        <dbReference type="ChEBI" id="CHEBI:15379"/>
    </ligand>
</feature>
<feature type="binding site" description="proximal binding residue" evidence="7 9 10 11 12 13 14 15 16 17 18 19 20 21 22 23 24 25 26">
    <location>
        <position position="94"/>
    </location>
    <ligand>
        <name>heme b</name>
        <dbReference type="ChEBI" id="CHEBI:60344"/>
    </ligand>
    <ligandPart>
        <name>Fe</name>
        <dbReference type="ChEBI" id="CHEBI:18248"/>
    </ligandPart>
</feature>
<feature type="modified residue" description="Phosphoserine" evidence="5">
    <location>
        <position position="4"/>
    </location>
</feature>
<feature type="modified residue" description="Phosphothreonine" evidence="3">
    <location>
        <position position="68"/>
    </location>
</feature>
<feature type="helix" evidence="28">
    <location>
        <begin position="5"/>
        <end position="19"/>
    </location>
</feature>
<feature type="helix" evidence="28">
    <location>
        <begin position="22"/>
        <end position="36"/>
    </location>
</feature>
<feature type="helix" evidence="28">
    <location>
        <begin position="38"/>
        <end position="41"/>
    </location>
</feature>
<feature type="helix" evidence="28">
    <location>
        <begin position="45"/>
        <end position="47"/>
    </location>
</feature>
<feature type="helix" evidence="28">
    <location>
        <begin position="53"/>
        <end position="58"/>
    </location>
</feature>
<feature type="helix" evidence="28">
    <location>
        <begin position="60"/>
        <end position="77"/>
    </location>
</feature>
<feature type="turn" evidence="28">
    <location>
        <begin position="78"/>
        <end position="81"/>
    </location>
</feature>
<feature type="helix" evidence="28">
    <location>
        <begin position="84"/>
        <end position="95"/>
    </location>
</feature>
<feature type="turn" evidence="27">
    <location>
        <begin position="96"/>
        <end position="98"/>
    </location>
</feature>
<feature type="helix" evidence="28">
    <location>
        <begin position="102"/>
        <end position="119"/>
    </location>
</feature>
<feature type="turn" evidence="28">
    <location>
        <begin position="121"/>
        <end position="123"/>
    </location>
</feature>
<feature type="helix" evidence="28">
    <location>
        <begin position="126"/>
        <end position="149"/>
    </location>
</feature>
<protein>
    <recommendedName>
        <fullName>Myoglobin</fullName>
    </recommendedName>
    <alternativeName>
        <fullName evidence="1">Nitrite reductase MB</fullName>
        <ecNumber evidence="1">1.7.-.-</ecNumber>
    </alternativeName>
    <alternativeName>
        <fullName evidence="1">Pseudoperoxidase MB</fullName>
        <ecNumber evidence="1">1.11.1.-</ecNumber>
    </alternativeName>
</protein>
<keyword id="KW-0002">3D-structure</keyword>
<keyword id="KW-0963">Cytoplasm</keyword>
<keyword id="KW-0903">Direct protein sequencing</keyword>
<keyword id="KW-0349">Heme</keyword>
<keyword id="KW-0408">Iron</keyword>
<keyword id="KW-0479">Metal-binding</keyword>
<keyword id="KW-0514">Muscle protein</keyword>
<keyword id="KW-0560">Oxidoreductase</keyword>
<keyword id="KW-0561">Oxygen transport</keyword>
<keyword id="KW-0597">Phosphoprotein</keyword>
<keyword id="KW-1185">Reference proteome</keyword>
<keyword id="KW-0813">Transport</keyword>
<name>MYG_PIG</name>
<reference key="1">
    <citation type="journal article" date="1985" name="Gene">
        <title>Cloning and sequence analysis of porcine myoglobin cDNA.</title>
        <authorList>
            <person name="Akaboshi E."/>
        </authorList>
    </citation>
    <scope>NUCLEOTIDE SEQUENCE [MRNA]</scope>
</reference>
<reference key="2">
    <citation type="journal article" date="1976" name="Biochim. Biophys. Acta">
        <title>Comparison of the amino acid sequence of pig heart myoglobin with other ungulate myoglobins.</title>
        <authorList>
            <person name="Rousseaux J."/>
            <person name="Dautrevaux M."/>
            <person name="Han K."/>
        </authorList>
    </citation>
    <scope>PROTEIN SEQUENCE OF 2-154</scope>
</reference>
<reference evidence="24" key="3">
    <citation type="journal article" date="1990" name="Acta Crystallogr. B">
        <title>Determination of the crystal structure of recombinant pig myoglobin by molecular replacement and its refinement.</title>
        <authorList>
            <person name="Smerdon S.J."/>
            <person name="Oldfield T.J."/>
            <person name="Dodson E.J."/>
            <person name="Dodson G.G."/>
            <person name="Hubbard R.E."/>
            <person name="Wilkinson A.J."/>
        </authorList>
    </citation>
    <scope>X-RAY CRYSTALLOGRAPHY (2.50 ANGSTROMS) OF 2-154 IN COMPLEX WITH HEME</scope>
</reference>
<reference evidence="10 11 12 17 18 19" key="4">
    <citation type="journal article" date="1998" name="Biochemistry">
        <title>Stabilizing bound O2 in myoglobin by valine68 (E11) to asparagine substitution.</title>
        <authorList>
            <person name="Krzywda S."/>
            <person name="Murshudov G.N."/>
            <person name="Brzozowski A.M."/>
            <person name="Jaskolski M."/>
            <person name="Scott E.E."/>
            <person name="Klizas S.A."/>
            <person name="Gibson Q.H."/>
            <person name="Olson J.S."/>
            <person name="Wilkinson A.J."/>
        </authorList>
    </citation>
    <scope>X-RAY CRYSTALLOGRAPHY (1.70 ANGSTROMS) OF 2-154 OF OXYMYOGLOBIN</scope>
</reference>
<evidence type="ECO:0000250" key="1">
    <source>
        <dbReference type="UniProtKB" id="P02144"/>
    </source>
</evidence>
<evidence type="ECO:0000250" key="2">
    <source>
        <dbReference type="UniProtKB" id="P02185"/>
    </source>
</evidence>
<evidence type="ECO:0000250" key="3">
    <source>
        <dbReference type="UniProtKB" id="P04247"/>
    </source>
</evidence>
<evidence type="ECO:0000250" key="4">
    <source>
        <dbReference type="UniProtKB" id="P68082"/>
    </source>
</evidence>
<evidence type="ECO:0000250" key="5">
    <source>
        <dbReference type="UniProtKB" id="Q9QZ76"/>
    </source>
</evidence>
<evidence type="ECO:0000255" key="6">
    <source>
        <dbReference type="PROSITE-ProRule" id="PRU00238"/>
    </source>
</evidence>
<evidence type="ECO:0000269" key="7">
    <source>
    </source>
</evidence>
<evidence type="ECO:0000269" key="8">
    <source>
    </source>
</evidence>
<evidence type="ECO:0000269" key="9">
    <source>
    </source>
</evidence>
<evidence type="ECO:0007744" key="10">
    <source>
        <dbReference type="PDB" id="1M6C"/>
    </source>
</evidence>
<evidence type="ECO:0007744" key="11">
    <source>
        <dbReference type="PDB" id="1M6M"/>
    </source>
</evidence>
<evidence type="ECO:0007744" key="12">
    <source>
        <dbReference type="PDB" id="1MDN"/>
    </source>
</evidence>
<evidence type="ECO:0007744" key="13">
    <source>
        <dbReference type="PDB" id="1MNH"/>
    </source>
</evidence>
<evidence type="ECO:0007744" key="14">
    <source>
        <dbReference type="PDB" id="1MNI"/>
    </source>
</evidence>
<evidence type="ECO:0007744" key="15">
    <source>
        <dbReference type="PDB" id="1MNJ"/>
    </source>
</evidence>
<evidence type="ECO:0007744" key="16">
    <source>
        <dbReference type="PDB" id="1MNK"/>
    </source>
</evidence>
<evidence type="ECO:0007744" key="17">
    <source>
        <dbReference type="PDB" id="1MNO"/>
    </source>
</evidence>
<evidence type="ECO:0007744" key="18">
    <source>
        <dbReference type="PDB" id="1MWC"/>
    </source>
</evidence>
<evidence type="ECO:0007744" key="19">
    <source>
        <dbReference type="PDB" id="1MWD"/>
    </source>
</evidence>
<evidence type="ECO:0007744" key="20">
    <source>
        <dbReference type="PDB" id="1MYG"/>
    </source>
</evidence>
<evidence type="ECO:0007744" key="21">
    <source>
        <dbReference type="PDB" id="1MYH"/>
    </source>
</evidence>
<evidence type="ECO:0007744" key="22">
    <source>
        <dbReference type="PDB" id="1MYI"/>
    </source>
</evidence>
<evidence type="ECO:0007744" key="23">
    <source>
        <dbReference type="PDB" id="1MYJ"/>
    </source>
</evidence>
<evidence type="ECO:0007744" key="24">
    <source>
        <dbReference type="PDB" id="1PMB"/>
    </source>
</evidence>
<evidence type="ECO:0007744" key="25">
    <source>
        <dbReference type="PDB" id="1YCA"/>
    </source>
</evidence>
<evidence type="ECO:0007744" key="26">
    <source>
        <dbReference type="PDB" id="1YCB"/>
    </source>
</evidence>
<evidence type="ECO:0007829" key="27">
    <source>
        <dbReference type="PDB" id="1M6M"/>
    </source>
</evidence>
<evidence type="ECO:0007829" key="28">
    <source>
        <dbReference type="PDB" id="1MWC"/>
    </source>
</evidence>
<gene>
    <name type="primary">MB</name>
</gene>
<organism>
    <name type="scientific">Sus scrofa</name>
    <name type="common">Pig</name>
    <dbReference type="NCBI Taxonomy" id="9823"/>
    <lineage>
        <taxon>Eukaryota</taxon>
        <taxon>Metazoa</taxon>
        <taxon>Chordata</taxon>
        <taxon>Craniata</taxon>
        <taxon>Vertebrata</taxon>
        <taxon>Euteleostomi</taxon>
        <taxon>Mammalia</taxon>
        <taxon>Eutheria</taxon>
        <taxon>Laurasiatheria</taxon>
        <taxon>Artiodactyla</taxon>
        <taxon>Suina</taxon>
        <taxon>Suidae</taxon>
        <taxon>Sus</taxon>
    </lineage>
</organism>